<protein>
    <recommendedName>
        <fullName>CDGSH iron-sulfur domain-containing protein 2 homolog</fullName>
    </recommendedName>
</protein>
<accession>B4PQ50</accession>
<proteinExistence type="inferred from homology"/>
<reference key="1">
    <citation type="journal article" date="2007" name="Nature">
        <title>Evolution of genes and genomes on the Drosophila phylogeny.</title>
        <authorList>
            <consortium name="Drosophila 12 genomes consortium"/>
        </authorList>
    </citation>
    <scope>NUCLEOTIDE SEQUENCE [LARGE SCALE GENOMIC DNA]</scope>
    <source>
        <strain>Tai18E2 / Tucson 14021-0261.01</strain>
    </source>
</reference>
<evidence type="ECO:0000250" key="1"/>
<evidence type="ECO:0000250" key="2">
    <source>
        <dbReference type="UniProtKB" id="Q9VAM6"/>
    </source>
</evidence>
<evidence type="ECO:0000255" key="3"/>
<evidence type="ECO:0000305" key="4"/>
<organism>
    <name type="scientific">Drosophila yakuba</name>
    <name type="common">Fruit fly</name>
    <dbReference type="NCBI Taxonomy" id="7245"/>
    <lineage>
        <taxon>Eukaryota</taxon>
        <taxon>Metazoa</taxon>
        <taxon>Ecdysozoa</taxon>
        <taxon>Arthropoda</taxon>
        <taxon>Hexapoda</taxon>
        <taxon>Insecta</taxon>
        <taxon>Pterygota</taxon>
        <taxon>Neoptera</taxon>
        <taxon>Endopterygota</taxon>
        <taxon>Diptera</taxon>
        <taxon>Brachycera</taxon>
        <taxon>Muscomorpha</taxon>
        <taxon>Ephydroidea</taxon>
        <taxon>Drosophilidae</taxon>
        <taxon>Drosophila</taxon>
        <taxon>Sophophora</taxon>
    </lineage>
</organism>
<name>CISD2_DROYA</name>
<dbReference type="EMBL" id="CM000160">
    <property type="protein sequence ID" value="EDW98319.1"/>
    <property type="molecule type" value="Genomic_DNA"/>
</dbReference>
<dbReference type="SMR" id="B4PQ50"/>
<dbReference type="EnsemblMetazoa" id="FBtr0256983">
    <property type="protein sequence ID" value="FBpp0255475"/>
    <property type="gene ID" value="FBgn0228326"/>
</dbReference>
<dbReference type="EnsemblMetazoa" id="XM_002098571.3">
    <property type="protein sequence ID" value="XP_002098607.1"/>
    <property type="gene ID" value="LOC6538072"/>
</dbReference>
<dbReference type="GeneID" id="6538072"/>
<dbReference type="KEGG" id="dya:Dyak_GE10465"/>
<dbReference type="CTD" id="493856"/>
<dbReference type="eggNOG" id="KOG3461">
    <property type="taxonomic scope" value="Eukaryota"/>
</dbReference>
<dbReference type="HOGENOM" id="CLU_132293_1_0_1"/>
<dbReference type="OMA" id="QIRKHEP"/>
<dbReference type="OrthoDB" id="449252at2759"/>
<dbReference type="PhylomeDB" id="B4PQ50"/>
<dbReference type="Proteomes" id="UP000002282">
    <property type="component" value="Chromosome 3R"/>
</dbReference>
<dbReference type="GO" id="GO:0005789">
    <property type="term" value="C:endoplasmic reticulum membrane"/>
    <property type="evidence" value="ECO:0007669"/>
    <property type="project" value="UniProtKB-SubCell"/>
</dbReference>
<dbReference type="GO" id="GO:0005741">
    <property type="term" value="C:mitochondrial outer membrane"/>
    <property type="evidence" value="ECO:0007669"/>
    <property type="project" value="EnsemblMetazoa"/>
</dbReference>
<dbReference type="GO" id="GO:0051537">
    <property type="term" value="F:2 iron, 2 sulfur cluster binding"/>
    <property type="evidence" value="ECO:0007669"/>
    <property type="project" value="UniProtKB-KW"/>
</dbReference>
<dbReference type="GO" id="GO:0046872">
    <property type="term" value="F:metal ion binding"/>
    <property type="evidence" value="ECO:0007669"/>
    <property type="project" value="UniProtKB-KW"/>
</dbReference>
<dbReference type="GO" id="GO:0006879">
    <property type="term" value="P:intracellular iron ion homeostasis"/>
    <property type="evidence" value="ECO:0007669"/>
    <property type="project" value="EnsemblMetazoa"/>
</dbReference>
<dbReference type="GO" id="GO:0006839">
    <property type="term" value="P:mitochondrial transport"/>
    <property type="evidence" value="ECO:0007669"/>
    <property type="project" value="EnsemblMetazoa"/>
</dbReference>
<dbReference type="GO" id="GO:0010506">
    <property type="term" value="P:regulation of autophagy"/>
    <property type="evidence" value="ECO:0007669"/>
    <property type="project" value="InterPro"/>
</dbReference>
<dbReference type="Gene3D" id="3.40.5.90">
    <property type="entry name" value="CDGSH iron-sulfur domain, mitoNEET-type"/>
    <property type="match status" value="1"/>
</dbReference>
<dbReference type="InterPro" id="IPR045131">
    <property type="entry name" value="CISD1/2"/>
</dbReference>
<dbReference type="InterPro" id="IPR018967">
    <property type="entry name" value="FeS-contain_CDGSH-typ"/>
</dbReference>
<dbReference type="InterPro" id="IPR019610">
    <property type="entry name" value="FeS-contain_mitoNEET_N"/>
</dbReference>
<dbReference type="InterPro" id="IPR042216">
    <property type="entry name" value="MitoNEET_CISD"/>
</dbReference>
<dbReference type="PANTHER" id="PTHR13680">
    <property type="entry name" value="CDGSH IRON-SULFUR DOMAIN-CONTAINING PROTEIN 1"/>
    <property type="match status" value="1"/>
</dbReference>
<dbReference type="PANTHER" id="PTHR13680:SF5">
    <property type="entry name" value="CDGSH IRON-SULFUR DOMAIN-CONTAINING PROTEIN 1"/>
    <property type="match status" value="1"/>
</dbReference>
<dbReference type="Pfam" id="PF10660">
    <property type="entry name" value="MitoNEET_N"/>
    <property type="match status" value="1"/>
</dbReference>
<dbReference type="Pfam" id="PF09360">
    <property type="entry name" value="zf-CDGSH"/>
    <property type="match status" value="1"/>
</dbReference>
<dbReference type="SMART" id="SM00704">
    <property type="entry name" value="ZnF_CDGSH"/>
    <property type="match status" value="1"/>
</dbReference>
<comment type="cofactor">
    <cofactor evidence="1">
        <name>[2Fe-2S] cluster</name>
        <dbReference type="ChEBI" id="CHEBI:190135"/>
    </cofactor>
    <text evidence="1">Binds 1 [2Fe-2S] cluster.</text>
</comment>
<comment type="subcellular location">
    <subcellularLocation>
        <location evidence="4">Endoplasmic reticulum membrane</location>
        <topology evidence="4">Single-pass membrane protein</topology>
    </subcellularLocation>
</comment>
<comment type="similarity">
    <text evidence="4">Belongs to the CISD protein family. CISD2 subfamily.</text>
</comment>
<gene>
    <name evidence="2" type="primary">Cisd2</name>
    <name type="ORF">GE10465</name>
</gene>
<keyword id="KW-0001">2Fe-2S</keyword>
<keyword id="KW-0256">Endoplasmic reticulum</keyword>
<keyword id="KW-0408">Iron</keyword>
<keyword id="KW-0411">Iron-sulfur</keyword>
<keyword id="KW-0472">Membrane</keyword>
<keyword id="KW-0479">Metal-binding</keyword>
<keyword id="KW-0812">Transmembrane</keyword>
<keyword id="KW-1133">Transmembrane helix</keyword>
<sequence>MEPISHLVKSSLPNYLSSLPIPDSVGGWFKLSFKDWLALIPPTVVVAGIGYTAYLAYCPAAKAICSAKTSGRCNNLIRKNEPKVVDMIDVEDIAEKAAFCRCWKTKNWPYCDGSHGEHNKQTGDNVGPIVIKK</sequence>
<feature type="chain" id="PRO_0000392032" description="CDGSH iron-sulfur domain-containing protein 2 homolog">
    <location>
        <begin position="1"/>
        <end position="133"/>
    </location>
</feature>
<feature type="topological domain" description="Lumenal" evidence="3">
    <location>
        <begin position="1"/>
        <end position="35"/>
    </location>
</feature>
<feature type="transmembrane region" description="Helical" evidence="3">
    <location>
        <begin position="36"/>
        <end position="58"/>
    </location>
</feature>
<feature type="topological domain" description="Cytoplasmic" evidence="3">
    <location>
        <begin position="59"/>
        <end position="133"/>
    </location>
</feature>
<feature type="binding site" evidence="1">
    <location>
        <position position="100"/>
    </location>
    <ligand>
        <name>[2Fe-2S] cluster</name>
        <dbReference type="ChEBI" id="CHEBI:190135"/>
    </ligand>
</feature>
<feature type="binding site" evidence="1">
    <location>
        <position position="102"/>
    </location>
    <ligand>
        <name>[2Fe-2S] cluster</name>
        <dbReference type="ChEBI" id="CHEBI:190135"/>
    </ligand>
</feature>
<feature type="binding site" evidence="1">
    <location>
        <position position="111"/>
    </location>
    <ligand>
        <name>[2Fe-2S] cluster</name>
        <dbReference type="ChEBI" id="CHEBI:190135"/>
    </ligand>
</feature>
<feature type="binding site" evidence="1">
    <location>
        <position position="115"/>
    </location>
    <ligand>
        <name>[2Fe-2S] cluster</name>
        <dbReference type="ChEBI" id="CHEBI:190135"/>
    </ligand>
</feature>